<protein>
    <recommendedName>
        <fullName evidence="1">Serine hydroxymethyltransferase</fullName>
        <shortName evidence="1">SHMT</shortName>
        <shortName evidence="1">Serine methylase</shortName>
        <ecNumber evidence="1">2.1.2.1</ecNumber>
    </recommendedName>
</protein>
<organism>
    <name type="scientific">Rhodopirellula baltica (strain DSM 10527 / NCIMB 13988 / SH1)</name>
    <dbReference type="NCBI Taxonomy" id="243090"/>
    <lineage>
        <taxon>Bacteria</taxon>
        <taxon>Pseudomonadati</taxon>
        <taxon>Planctomycetota</taxon>
        <taxon>Planctomycetia</taxon>
        <taxon>Pirellulales</taxon>
        <taxon>Pirellulaceae</taxon>
        <taxon>Rhodopirellula</taxon>
    </lineage>
</organism>
<gene>
    <name evidence="1" type="primary">glyA</name>
    <name type="ordered locus">RB6215</name>
</gene>
<dbReference type="EC" id="2.1.2.1" evidence="1"/>
<dbReference type="EMBL" id="BX294143">
    <property type="protein sequence ID" value="CAD74668.1"/>
    <property type="molecule type" value="Genomic_DNA"/>
</dbReference>
<dbReference type="RefSeq" id="NP_867123.1">
    <property type="nucleotide sequence ID" value="NC_005027.1"/>
</dbReference>
<dbReference type="RefSeq" id="WP_011120806.1">
    <property type="nucleotide sequence ID" value="NC_005027.1"/>
</dbReference>
<dbReference type="SMR" id="Q7UQN2"/>
<dbReference type="FunCoup" id="Q7UQN2">
    <property type="interactions" value="525"/>
</dbReference>
<dbReference type="STRING" id="243090.RB6215"/>
<dbReference type="EnsemblBacteria" id="CAD74668">
    <property type="protein sequence ID" value="CAD74668"/>
    <property type="gene ID" value="RB6215"/>
</dbReference>
<dbReference type="KEGG" id="rba:RB6215"/>
<dbReference type="PATRIC" id="fig|243090.15.peg.2994"/>
<dbReference type="eggNOG" id="COG0112">
    <property type="taxonomic scope" value="Bacteria"/>
</dbReference>
<dbReference type="HOGENOM" id="CLU_022477_2_1_0"/>
<dbReference type="InParanoid" id="Q7UQN2"/>
<dbReference type="OrthoDB" id="9803846at2"/>
<dbReference type="UniPathway" id="UPA00193"/>
<dbReference type="UniPathway" id="UPA00288">
    <property type="reaction ID" value="UER01023"/>
</dbReference>
<dbReference type="Proteomes" id="UP000001025">
    <property type="component" value="Chromosome"/>
</dbReference>
<dbReference type="GO" id="GO:0005737">
    <property type="term" value="C:cytoplasm"/>
    <property type="evidence" value="ECO:0000318"/>
    <property type="project" value="GO_Central"/>
</dbReference>
<dbReference type="GO" id="GO:0005829">
    <property type="term" value="C:cytosol"/>
    <property type="evidence" value="ECO:0000318"/>
    <property type="project" value="GO_Central"/>
</dbReference>
<dbReference type="GO" id="GO:0004372">
    <property type="term" value="F:glycine hydroxymethyltransferase activity"/>
    <property type="evidence" value="ECO:0000318"/>
    <property type="project" value="GO_Central"/>
</dbReference>
<dbReference type="GO" id="GO:0030170">
    <property type="term" value="F:pyridoxal phosphate binding"/>
    <property type="evidence" value="ECO:0000318"/>
    <property type="project" value="GO_Central"/>
</dbReference>
<dbReference type="GO" id="GO:0019264">
    <property type="term" value="P:glycine biosynthetic process from serine"/>
    <property type="evidence" value="ECO:0000318"/>
    <property type="project" value="GO_Central"/>
</dbReference>
<dbReference type="GO" id="GO:0035999">
    <property type="term" value="P:tetrahydrofolate interconversion"/>
    <property type="evidence" value="ECO:0007669"/>
    <property type="project" value="UniProtKB-UniRule"/>
</dbReference>
<dbReference type="GO" id="GO:0046653">
    <property type="term" value="P:tetrahydrofolate metabolic process"/>
    <property type="evidence" value="ECO:0000318"/>
    <property type="project" value="GO_Central"/>
</dbReference>
<dbReference type="CDD" id="cd00378">
    <property type="entry name" value="SHMT"/>
    <property type="match status" value="1"/>
</dbReference>
<dbReference type="FunFam" id="3.40.640.10:FF:000001">
    <property type="entry name" value="Serine hydroxymethyltransferase"/>
    <property type="match status" value="1"/>
</dbReference>
<dbReference type="Gene3D" id="3.90.1150.10">
    <property type="entry name" value="Aspartate Aminotransferase, domain 1"/>
    <property type="match status" value="1"/>
</dbReference>
<dbReference type="Gene3D" id="3.40.640.10">
    <property type="entry name" value="Type I PLP-dependent aspartate aminotransferase-like (Major domain)"/>
    <property type="match status" value="1"/>
</dbReference>
<dbReference type="HAMAP" id="MF_00051">
    <property type="entry name" value="SHMT"/>
    <property type="match status" value="1"/>
</dbReference>
<dbReference type="InterPro" id="IPR015424">
    <property type="entry name" value="PyrdxlP-dep_Trfase"/>
</dbReference>
<dbReference type="InterPro" id="IPR015421">
    <property type="entry name" value="PyrdxlP-dep_Trfase_major"/>
</dbReference>
<dbReference type="InterPro" id="IPR015422">
    <property type="entry name" value="PyrdxlP-dep_Trfase_small"/>
</dbReference>
<dbReference type="InterPro" id="IPR001085">
    <property type="entry name" value="Ser_HO-MeTrfase"/>
</dbReference>
<dbReference type="InterPro" id="IPR049943">
    <property type="entry name" value="Ser_HO-MeTrfase-like"/>
</dbReference>
<dbReference type="InterPro" id="IPR019798">
    <property type="entry name" value="Ser_HO-MeTrfase_PLP_BS"/>
</dbReference>
<dbReference type="InterPro" id="IPR039429">
    <property type="entry name" value="SHMT-like_dom"/>
</dbReference>
<dbReference type="NCBIfam" id="NF000586">
    <property type="entry name" value="PRK00011.1"/>
    <property type="match status" value="1"/>
</dbReference>
<dbReference type="PANTHER" id="PTHR11680">
    <property type="entry name" value="SERINE HYDROXYMETHYLTRANSFERASE"/>
    <property type="match status" value="1"/>
</dbReference>
<dbReference type="PANTHER" id="PTHR11680:SF35">
    <property type="entry name" value="SERINE HYDROXYMETHYLTRANSFERASE 1"/>
    <property type="match status" value="1"/>
</dbReference>
<dbReference type="Pfam" id="PF00464">
    <property type="entry name" value="SHMT"/>
    <property type="match status" value="1"/>
</dbReference>
<dbReference type="PIRSF" id="PIRSF000412">
    <property type="entry name" value="SHMT"/>
    <property type="match status" value="1"/>
</dbReference>
<dbReference type="SUPFAM" id="SSF53383">
    <property type="entry name" value="PLP-dependent transferases"/>
    <property type="match status" value="1"/>
</dbReference>
<dbReference type="PROSITE" id="PS00096">
    <property type="entry name" value="SHMT"/>
    <property type="match status" value="1"/>
</dbReference>
<feature type="chain" id="PRO_0000113650" description="Serine hydroxymethyltransferase">
    <location>
        <begin position="1"/>
        <end position="420"/>
    </location>
</feature>
<feature type="binding site" evidence="1">
    <location>
        <position position="117"/>
    </location>
    <ligand>
        <name>(6S)-5,6,7,8-tetrahydrofolate</name>
        <dbReference type="ChEBI" id="CHEBI:57453"/>
    </ligand>
</feature>
<feature type="binding site" evidence="1">
    <location>
        <begin position="121"/>
        <end position="123"/>
    </location>
    <ligand>
        <name>(6S)-5,6,7,8-tetrahydrofolate</name>
        <dbReference type="ChEBI" id="CHEBI:57453"/>
    </ligand>
</feature>
<feature type="site" description="Plays an important role in substrate specificity" evidence="1">
    <location>
        <position position="225"/>
    </location>
</feature>
<feature type="modified residue" description="N6-(pyridoxal phosphate)lysine" evidence="1">
    <location>
        <position position="226"/>
    </location>
</feature>
<reference key="1">
    <citation type="journal article" date="2003" name="Proc. Natl. Acad. Sci. U.S.A.">
        <title>Complete genome sequence of the marine planctomycete Pirellula sp. strain 1.</title>
        <authorList>
            <person name="Gloeckner F.O."/>
            <person name="Kube M."/>
            <person name="Bauer M."/>
            <person name="Teeling H."/>
            <person name="Lombardot T."/>
            <person name="Ludwig W."/>
            <person name="Gade D."/>
            <person name="Beck A."/>
            <person name="Borzym K."/>
            <person name="Heitmann K."/>
            <person name="Rabus R."/>
            <person name="Schlesner H."/>
            <person name="Amann R."/>
            <person name="Reinhardt R."/>
        </authorList>
    </citation>
    <scope>NUCLEOTIDE SEQUENCE [LARGE SCALE GENOMIC DNA]</scope>
    <source>
        <strain>DSM 10527 / NCIMB 13988 / SH1</strain>
    </source>
</reference>
<evidence type="ECO:0000255" key="1">
    <source>
        <dbReference type="HAMAP-Rule" id="MF_00051"/>
    </source>
</evidence>
<accession>Q7UQN2</accession>
<proteinExistence type="inferred from homology"/>
<comment type="function">
    <text evidence="1">Catalyzes the reversible interconversion of serine and glycine with tetrahydrofolate (THF) serving as the one-carbon carrier. This reaction serves as the major source of one-carbon groups required for the biosynthesis of purines, thymidylate, methionine, and other important biomolecules. Also exhibits THF-independent aldolase activity toward beta-hydroxyamino acids, producing glycine and aldehydes, via a retro-aldol mechanism.</text>
</comment>
<comment type="catalytic activity">
    <reaction evidence="1">
        <text>(6R)-5,10-methylene-5,6,7,8-tetrahydrofolate + glycine + H2O = (6S)-5,6,7,8-tetrahydrofolate + L-serine</text>
        <dbReference type="Rhea" id="RHEA:15481"/>
        <dbReference type="ChEBI" id="CHEBI:15377"/>
        <dbReference type="ChEBI" id="CHEBI:15636"/>
        <dbReference type="ChEBI" id="CHEBI:33384"/>
        <dbReference type="ChEBI" id="CHEBI:57305"/>
        <dbReference type="ChEBI" id="CHEBI:57453"/>
        <dbReference type="EC" id="2.1.2.1"/>
    </reaction>
</comment>
<comment type="cofactor">
    <cofactor evidence="1">
        <name>pyridoxal 5'-phosphate</name>
        <dbReference type="ChEBI" id="CHEBI:597326"/>
    </cofactor>
</comment>
<comment type="pathway">
    <text evidence="1">One-carbon metabolism; tetrahydrofolate interconversion.</text>
</comment>
<comment type="pathway">
    <text evidence="1">Amino-acid biosynthesis; glycine biosynthesis; glycine from L-serine: step 1/1.</text>
</comment>
<comment type="subunit">
    <text evidence="1">Homodimer.</text>
</comment>
<comment type="subcellular location">
    <subcellularLocation>
        <location evidence="1">Cytoplasm</location>
    </subcellularLocation>
</comment>
<comment type="similarity">
    <text evidence="1">Belongs to the SHMT family.</text>
</comment>
<keyword id="KW-0028">Amino-acid biosynthesis</keyword>
<keyword id="KW-0963">Cytoplasm</keyword>
<keyword id="KW-0554">One-carbon metabolism</keyword>
<keyword id="KW-0663">Pyridoxal phosphate</keyword>
<keyword id="KW-1185">Reference proteome</keyword>
<keyword id="KW-0808">Transferase</keyword>
<sequence>MSFIQSQDPAIWDAIQAETTRQQDGLEMIASENYTSPAIMEAVGSILTNKYAEGYPGRRYYGGCEHVDVVETIAIDRAKELFGAEAANVQPHSGSQANAAVYLSCLEVGDTVLGLDLAQGGHLTHGMKLNMSGRLYNFVNYGVDKVNHRLDFDQIVKLAREHKPKLIVAGASAYPREIPHDRFKEIADEVGAKLMVDMAHYAGLVAAKIHNSPVPYADYVTTTTHKTLRGPRSGLIMCKEEHLKLVNRNVFPGTQGGPLMHVVAGKAICFAEAMTEEYAHYGQAVVDNAKTLADTLLSCGLRLVSGGTDNHLMLVDVTAVDLGGKKAEAVLDACGITVNMNMIPFDQRKPMDPSGIRIGTPALTTRGMGGDEMKRIGQWIYNALSDSDNAALHESIRTEIREMVQAFPVPAAAESPATVA</sequence>
<name>GLYA_RHOBA</name>